<organism>
    <name type="scientific">Shewanella baltica (strain OS195)</name>
    <dbReference type="NCBI Taxonomy" id="399599"/>
    <lineage>
        <taxon>Bacteria</taxon>
        <taxon>Pseudomonadati</taxon>
        <taxon>Pseudomonadota</taxon>
        <taxon>Gammaproteobacteria</taxon>
        <taxon>Alteromonadales</taxon>
        <taxon>Shewanellaceae</taxon>
        <taxon>Shewanella</taxon>
    </lineage>
</organism>
<feature type="chain" id="PRO_1000082354" description="Urocanate hydratase">
    <location>
        <begin position="1"/>
        <end position="555"/>
    </location>
</feature>
<feature type="active site" evidence="1">
    <location>
        <position position="410"/>
    </location>
</feature>
<feature type="binding site" evidence="1">
    <location>
        <begin position="52"/>
        <end position="53"/>
    </location>
    <ligand>
        <name>NAD(+)</name>
        <dbReference type="ChEBI" id="CHEBI:57540"/>
    </ligand>
</feature>
<feature type="binding site" evidence="1">
    <location>
        <position position="130"/>
    </location>
    <ligand>
        <name>NAD(+)</name>
        <dbReference type="ChEBI" id="CHEBI:57540"/>
    </ligand>
</feature>
<feature type="binding site" evidence="1">
    <location>
        <begin position="176"/>
        <end position="178"/>
    </location>
    <ligand>
        <name>NAD(+)</name>
        <dbReference type="ChEBI" id="CHEBI:57540"/>
    </ligand>
</feature>
<feature type="binding site" evidence="1">
    <location>
        <position position="196"/>
    </location>
    <ligand>
        <name>NAD(+)</name>
        <dbReference type="ChEBI" id="CHEBI:57540"/>
    </ligand>
</feature>
<feature type="binding site" evidence="1">
    <location>
        <position position="201"/>
    </location>
    <ligand>
        <name>NAD(+)</name>
        <dbReference type="ChEBI" id="CHEBI:57540"/>
    </ligand>
</feature>
<feature type="binding site" evidence="1">
    <location>
        <begin position="242"/>
        <end position="243"/>
    </location>
    <ligand>
        <name>NAD(+)</name>
        <dbReference type="ChEBI" id="CHEBI:57540"/>
    </ligand>
</feature>
<feature type="binding site" evidence="1">
    <location>
        <begin position="263"/>
        <end position="267"/>
    </location>
    <ligand>
        <name>NAD(+)</name>
        <dbReference type="ChEBI" id="CHEBI:57540"/>
    </ligand>
</feature>
<feature type="binding site" evidence="1">
    <location>
        <begin position="273"/>
        <end position="274"/>
    </location>
    <ligand>
        <name>NAD(+)</name>
        <dbReference type="ChEBI" id="CHEBI:57540"/>
    </ligand>
</feature>
<feature type="binding site" evidence="1">
    <location>
        <position position="322"/>
    </location>
    <ligand>
        <name>NAD(+)</name>
        <dbReference type="ChEBI" id="CHEBI:57540"/>
    </ligand>
</feature>
<feature type="binding site" evidence="1">
    <location>
        <position position="492"/>
    </location>
    <ligand>
        <name>NAD(+)</name>
        <dbReference type="ChEBI" id="CHEBI:57540"/>
    </ligand>
</feature>
<name>HUTU_SHEB9</name>
<sequence length="555" mass="60339">MDKRHDPSRRIIAPHGTQLSCKSWLTEAPMRMLMNNLHPDVAERPEDLVVYGGIGRAARDWDCYDKIIEVLQRLEDDETLLVQSGKPVGVFRTHADAPRVLIANSNLVPHWANWEHFNELDKLGLAMYGQMTAGSWIYIGTQGIVQGTYETFVSVAKQHFDGISKGKWILTGGLGGMGGAQTLAGTMAGFSVLACEVDETRIDFRLRTRYVDKKATSLDEALAMIEEANQAGKPVSVGLLANAADVFAELVKRGVTPDVVTDQTSAHDPLNGYLPQGWTMAEAAAMRKTDEAAVIKAAKASMAVQVQAMLDLQTAGAATLDYGNNIRQMAFEMGVENAFDFPGFVPAYIRPLFCEGIGPFRWVALSGDPEDIYKTDAKVKELIPDNPHLHNWLDMARERIAFQGLPARICWVGLKDRARLALAFNEMVKNGELSAPVVIGRDHLDSGSVASPNRETESMLDGSDAVSDWPLLNALLNTASGATWVSLHHGGGVGMGFSQHSGVVIVCDGTDAAAKRVGRVLWNDPATGVMRHADAGYEIAKNCAKEQGLDLPMQD</sequence>
<dbReference type="EC" id="4.2.1.49" evidence="1"/>
<dbReference type="EMBL" id="CP000891">
    <property type="protein sequence ID" value="ABX47284.1"/>
    <property type="molecule type" value="Genomic_DNA"/>
</dbReference>
<dbReference type="RefSeq" id="WP_012196498.1">
    <property type="nucleotide sequence ID" value="NC_009997.1"/>
</dbReference>
<dbReference type="SMR" id="A9KV80"/>
<dbReference type="GeneID" id="11770466"/>
<dbReference type="KEGG" id="sbn:Sbal195_0102"/>
<dbReference type="HOGENOM" id="CLU_018868_0_1_6"/>
<dbReference type="UniPathway" id="UPA00379">
    <property type="reaction ID" value="UER00550"/>
</dbReference>
<dbReference type="Proteomes" id="UP000000770">
    <property type="component" value="Chromosome"/>
</dbReference>
<dbReference type="GO" id="GO:0005737">
    <property type="term" value="C:cytoplasm"/>
    <property type="evidence" value="ECO:0007669"/>
    <property type="project" value="UniProtKB-SubCell"/>
</dbReference>
<dbReference type="GO" id="GO:0016153">
    <property type="term" value="F:urocanate hydratase activity"/>
    <property type="evidence" value="ECO:0007669"/>
    <property type="project" value="UniProtKB-UniRule"/>
</dbReference>
<dbReference type="GO" id="GO:0019556">
    <property type="term" value="P:L-histidine catabolic process to glutamate and formamide"/>
    <property type="evidence" value="ECO:0007669"/>
    <property type="project" value="UniProtKB-UniPathway"/>
</dbReference>
<dbReference type="GO" id="GO:0019557">
    <property type="term" value="P:L-histidine catabolic process to glutamate and formate"/>
    <property type="evidence" value="ECO:0007669"/>
    <property type="project" value="UniProtKB-UniPathway"/>
</dbReference>
<dbReference type="FunFam" id="3.40.50.10730:FF:000001">
    <property type="entry name" value="Urocanate hydratase"/>
    <property type="match status" value="1"/>
</dbReference>
<dbReference type="Gene3D" id="3.40.50.10730">
    <property type="entry name" value="Urocanase like domains"/>
    <property type="match status" value="1"/>
</dbReference>
<dbReference type="Gene3D" id="3.40.1770.10">
    <property type="entry name" value="Urocanase superfamily"/>
    <property type="match status" value="1"/>
</dbReference>
<dbReference type="HAMAP" id="MF_00577">
    <property type="entry name" value="HutU"/>
    <property type="match status" value="1"/>
</dbReference>
<dbReference type="InterPro" id="IPR055351">
    <property type="entry name" value="Urocanase"/>
</dbReference>
<dbReference type="InterPro" id="IPR023637">
    <property type="entry name" value="Urocanase-like"/>
</dbReference>
<dbReference type="InterPro" id="IPR035401">
    <property type="entry name" value="Urocanase_C"/>
</dbReference>
<dbReference type="InterPro" id="IPR038364">
    <property type="entry name" value="Urocanase_central_sf"/>
</dbReference>
<dbReference type="InterPro" id="IPR023636">
    <property type="entry name" value="Urocanase_CS"/>
</dbReference>
<dbReference type="InterPro" id="IPR035400">
    <property type="entry name" value="Urocanase_N"/>
</dbReference>
<dbReference type="InterPro" id="IPR035085">
    <property type="entry name" value="Urocanase_Rossmann-like"/>
</dbReference>
<dbReference type="InterPro" id="IPR036190">
    <property type="entry name" value="Urocanase_sf"/>
</dbReference>
<dbReference type="NCBIfam" id="TIGR01228">
    <property type="entry name" value="hutU"/>
    <property type="match status" value="1"/>
</dbReference>
<dbReference type="NCBIfam" id="NF003820">
    <property type="entry name" value="PRK05414.1"/>
    <property type="match status" value="1"/>
</dbReference>
<dbReference type="PANTHER" id="PTHR12216">
    <property type="entry name" value="UROCANATE HYDRATASE"/>
    <property type="match status" value="1"/>
</dbReference>
<dbReference type="PANTHER" id="PTHR12216:SF4">
    <property type="entry name" value="UROCANATE HYDRATASE"/>
    <property type="match status" value="1"/>
</dbReference>
<dbReference type="Pfam" id="PF01175">
    <property type="entry name" value="Urocanase"/>
    <property type="match status" value="1"/>
</dbReference>
<dbReference type="Pfam" id="PF17392">
    <property type="entry name" value="Urocanase_C"/>
    <property type="match status" value="1"/>
</dbReference>
<dbReference type="Pfam" id="PF17391">
    <property type="entry name" value="Urocanase_N"/>
    <property type="match status" value="1"/>
</dbReference>
<dbReference type="PIRSF" id="PIRSF001423">
    <property type="entry name" value="Urocanate_hydrat"/>
    <property type="match status" value="1"/>
</dbReference>
<dbReference type="SUPFAM" id="SSF111326">
    <property type="entry name" value="Urocanase"/>
    <property type="match status" value="1"/>
</dbReference>
<dbReference type="PROSITE" id="PS01233">
    <property type="entry name" value="UROCANASE"/>
    <property type="match status" value="1"/>
</dbReference>
<protein>
    <recommendedName>
        <fullName evidence="1">Urocanate hydratase</fullName>
        <shortName evidence="1">Urocanase</shortName>
        <ecNumber evidence="1">4.2.1.49</ecNumber>
    </recommendedName>
    <alternativeName>
        <fullName evidence="1">Imidazolonepropionate hydrolase</fullName>
    </alternativeName>
</protein>
<accession>A9KV80</accession>
<gene>
    <name evidence="1" type="primary">hutU</name>
    <name type="ordered locus">Sbal195_0102</name>
</gene>
<proteinExistence type="inferred from homology"/>
<keyword id="KW-0963">Cytoplasm</keyword>
<keyword id="KW-0369">Histidine metabolism</keyword>
<keyword id="KW-0456">Lyase</keyword>
<keyword id="KW-0520">NAD</keyword>
<evidence type="ECO:0000255" key="1">
    <source>
        <dbReference type="HAMAP-Rule" id="MF_00577"/>
    </source>
</evidence>
<reference key="1">
    <citation type="submission" date="2007-11" db="EMBL/GenBank/DDBJ databases">
        <title>Complete sequence of chromosome of Shewanella baltica OS195.</title>
        <authorList>
            <consortium name="US DOE Joint Genome Institute"/>
            <person name="Copeland A."/>
            <person name="Lucas S."/>
            <person name="Lapidus A."/>
            <person name="Barry K."/>
            <person name="Glavina del Rio T."/>
            <person name="Dalin E."/>
            <person name="Tice H."/>
            <person name="Pitluck S."/>
            <person name="Chain P."/>
            <person name="Malfatti S."/>
            <person name="Shin M."/>
            <person name="Vergez L."/>
            <person name="Schmutz J."/>
            <person name="Larimer F."/>
            <person name="Land M."/>
            <person name="Hauser L."/>
            <person name="Kyrpides N."/>
            <person name="Kim E."/>
            <person name="Brettar I."/>
            <person name="Rodrigues J."/>
            <person name="Konstantinidis K."/>
            <person name="Klappenbach J."/>
            <person name="Hofle M."/>
            <person name="Tiedje J."/>
            <person name="Richardson P."/>
        </authorList>
    </citation>
    <scope>NUCLEOTIDE SEQUENCE [LARGE SCALE GENOMIC DNA]</scope>
    <source>
        <strain>OS195</strain>
    </source>
</reference>
<comment type="function">
    <text evidence="1">Catalyzes the conversion of urocanate to 4-imidazolone-5-propionate.</text>
</comment>
<comment type="catalytic activity">
    <reaction evidence="1">
        <text>4-imidazolone-5-propanoate = trans-urocanate + H2O</text>
        <dbReference type="Rhea" id="RHEA:13101"/>
        <dbReference type="ChEBI" id="CHEBI:15377"/>
        <dbReference type="ChEBI" id="CHEBI:17771"/>
        <dbReference type="ChEBI" id="CHEBI:77893"/>
        <dbReference type="EC" id="4.2.1.49"/>
    </reaction>
</comment>
<comment type="cofactor">
    <cofactor evidence="1">
        <name>NAD(+)</name>
        <dbReference type="ChEBI" id="CHEBI:57540"/>
    </cofactor>
    <text evidence="1">Binds 1 NAD(+) per subunit.</text>
</comment>
<comment type="pathway">
    <text evidence="1">Amino-acid degradation; L-histidine degradation into L-glutamate; N-formimidoyl-L-glutamate from L-histidine: step 2/3.</text>
</comment>
<comment type="subcellular location">
    <subcellularLocation>
        <location evidence="1">Cytoplasm</location>
    </subcellularLocation>
</comment>
<comment type="similarity">
    <text evidence="1">Belongs to the urocanase family.</text>
</comment>